<proteinExistence type="inferred from homology"/>
<comment type="function">
    <text evidence="1">Binds together with bS18 to 16S ribosomal RNA.</text>
</comment>
<comment type="similarity">
    <text evidence="1">Belongs to the bacterial ribosomal protein bS6 family.</text>
</comment>
<keyword id="KW-0687">Ribonucleoprotein</keyword>
<keyword id="KW-0689">Ribosomal protein</keyword>
<keyword id="KW-0694">RNA-binding</keyword>
<keyword id="KW-0699">rRNA-binding</keyword>
<accession>B3CRZ7</accession>
<feature type="chain" id="PRO_1000120782" description="Small ribosomal subunit protein bS6">
    <location>
        <begin position="1"/>
        <end position="118"/>
    </location>
</feature>
<gene>
    <name evidence="1" type="primary">rpsF</name>
    <name type="ordered locus">OTT_0796</name>
</gene>
<protein>
    <recommendedName>
        <fullName evidence="1">Small ribosomal subunit protein bS6</fullName>
    </recommendedName>
    <alternativeName>
        <fullName evidence="2">30S ribosomal protein S6</fullName>
    </alternativeName>
</protein>
<evidence type="ECO:0000255" key="1">
    <source>
        <dbReference type="HAMAP-Rule" id="MF_00360"/>
    </source>
</evidence>
<evidence type="ECO:0000305" key="2"/>
<reference key="1">
    <citation type="journal article" date="2008" name="DNA Res.">
        <title>The whole-genome sequencing of the obligate intracellular bacterium Orientia tsutsugamushi revealed massive gene amplification during reductive genome evolution.</title>
        <authorList>
            <person name="Nakayama K."/>
            <person name="Yamashita A."/>
            <person name="Kurokawa K."/>
            <person name="Morimoto T."/>
            <person name="Ogawa M."/>
            <person name="Fukuhara M."/>
            <person name="Urakami H."/>
            <person name="Ohnishi M."/>
            <person name="Uchiyama I."/>
            <person name="Ogura Y."/>
            <person name="Ooka T."/>
            <person name="Oshima K."/>
            <person name="Tamura A."/>
            <person name="Hattori M."/>
            <person name="Hayashi T."/>
        </authorList>
    </citation>
    <scope>NUCLEOTIDE SEQUENCE [LARGE SCALE GENOMIC DNA]</scope>
    <source>
        <strain>Ikeda</strain>
    </source>
</reference>
<sequence length="118" mass="13734">MRLYELVLIVRPELSSTEIDKLTDELTSIISNYEGKLVKHEYWGMRSLAYKINRNQRAHYIMLAISANNNILQKLKNKIKNNLEIIRSRFIKVKEISQTTSPILKNQSLEQTAIDVTS</sequence>
<dbReference type="EMBL" id="AP008981">
    <property type="protein sequence ID" value="BAG40254.1"/>
    <property type="molecule type" value="Genomic_DNA"/>
</dbReference>
<dbReference type="RefSeq" id="WP_012461407.1">
    <property type="nucleotide sequence ID" value="NC_010793.1"/>
</dbReference>
<dbReference type="SMR" id="B3CRZ7"/>
<dbReference type="KEGG" id="ott:OTT_0796"/>
<dbReference type="HOGENOM" id="CLU_113441_2_0_5"/>
<dbReference type="OrthoDB" id="9812702at2"/>
<dbReference type="Proteomes" id="UP000001033">
    <property type="component" value="Chromosome"/>
</dbReference>
<dbReference type="GO" id="GO:0022627">
    <property type="term" value="C:cytosolic small ribosomal subunit"/>
    <property type="evidence" value="ECO:0007669"/>
    <property type="project" value="TreeGrafter"/>
</dbReference>
<dbReference type="GO" id="GO:0070181">
    <property type="term" value="F:small ribosomal subunit rRNA binding"/>
    <property type="evidence" value="ECO:0007669"/>
    <property type="project" value="TreeGrafter"/>
</dbReference>
<dbReference type="GO" id="GO:0003735">
    <property type="term" value="F:structural constituent of ribosome"/>
    <property type="evidence" value="ECO:0007669"/>
    <property type="project" value="InterPro"/>
</dbReference>
<dbReference type="GO" id="GO:0006412">
    <property type="term" value="P:translation"/>
    <property type="evidence" value="ECO:0007669"/>
    <property type="project" value="UniProtKB-UniRule"/>
</dbReference>
<dbReference type="CDD" id="cd00473">
    <property type="entry name" value="bS6"/>
    <property type="match status" value="1"/>
</dbReference>
<dbReference type="Gene3D" id="3.30.70.60">
    <property type="match status" value="1"/>
</dbReference>
<dbReference type="HAMAP" id="MF_00360">
    <property type="entry name" value="Ribosomal_bS6"/>
    <property type="match status" value="1"/>
</dbReference>
<dbReference type="InterPro" id="IPR000529">
    <property type="entry name" value="Ribosomal_bS6"/>
</dbReference>
<dbReference type="InterPro" id="IPR035980">
    <property type="entry name" value="Ribosomal_bS6_sf"/>
</dbReference>
<dbReference type="InterPro" id="IPR020814">
    <property type="entry name" value="Ribosomal_S6_plastid/chlpt"/>
</dbReference>
<dbReference type="InterPro" id="IPR014717">
    <property type="entry name" value="Transl_elong_EF1B/ribsomal_bS6"/>
</dbReference>
<dbReference type="NCBIfam" id="TIGR00166">
    <property type="entry name" value="S6"/>
    <property type="match status" value="1"/>
</dbReference>
<dbReference type="PANTHER" id="PTHR21011">
    <property type="entry name" value="MITOCHONDRIAL 28S RIBOSOMAL PROTEIN S6"/>
    <property type="match status" value="1"/>
</dbReference>
<dbReference type="PANTHER" id="PTHR21011:SF1">
    <property type="entry name" value="SMALL RIBOSOMAL SUBUNIT PROTEIN BS6M"/>
    <property type="match status" value="1"/>
</dbReference>
<dbReference type="Pfam" id="PF01250">
    <property type="entry name" value="Ribosomal_S6"/>
    <property type="match status" value="1"/>
</dbReference>
<dbReference type="SUPFAM" id="SSF54995">
    <property type="entry name" value="Ribosomal protein S6"/>
    <property type="match status" value="1"/>
</dbReference>
<organism>
    <name type="scientific">Orientia tsutsugamushi (strain Ikeda)</name>
    <name type="common">Rickettsia tsutsugamushi</name>
    <dbReference type="NCBI Taxonomy" id="334380"/>
    <lineage>
        <taxon>Bacteria</taxon>
        <taxon>Pseudomonadati</taxon>
        <taxon>Pseudomonadota</taxon>
        <taxon>Alphaproteobacteria</taxon>
        <taxon>Rickettsiales</taxon>
        <taxon>Rickettsiaceae</taxon>
        <taxon>Rickettsieae</taxon>
        <taxon>Orientia</taxon>
    </lineage>
</organism>
<name>RS6_ORITI</name>